<organism>
    <name type="scientific">Epstein-Barr virus (strain AG876)</name>
    <name type="common">HHV-4</name>
    <name type="synonym">Human herpesvirus 4</name>
    <dbReference type="NCBI Taxonomy" id="82830"/>
    <lineage>
        <taxon>Viruses</taxon>
        <taxon>Duplodnaviria</taxon>
        <taxon>Heunggongvirae</taxon>
        <taxon>Peploviricota</taxon>
        <taxon>Herviviricetes</taxon>
        <taxon>Herpesvirales</taxon>
        <taxon>Orthoherpesviridae</taxon>
        <taxon>Gammaherpesvirinae</taxon>
        <taxon>Lymphocryptovirus</taxon>
        <taxon>Lymphocryptovirus humangamma4</taxon>
        <taxon>Epstein-Barr virus (strain GD1)</taxon>
    </lineage>
</organism>
<reference key="1">
    <citation type="journal article" date="2006" name="Virology">
        <title>The genome of Epstein-Barr virus type 2 strain AG876.</title>
        <authorList>
            <person name="Dolan A."/>
            <person name="Addison C."/>
            <person name="Gatherer D."/>
            <person name="Davison A.J."/>
            <person name="McGeoch D.J."/>
        </authorList>
    </citation>
    <scope>NUCLEOTIDE SEQUENCE [LARGE SCALE GENOMIC DNA]</scope>
</reference>
<dbReference type="EMBL" id="DQ279927">
    <property type="protein sequence ID" value="ABB89221.1"/>
    <property type="molecule type" value="Genomic_DNA"/>
</dbReference>
<dbReference type="RefSeq" id="YP_001129440.1">
    <property type="nucleotide sequence ID" value="NC_009334.1"/>
</dbReference>
<dbReference type="KEGG" id="vg:5176191"/>
<dbReference type="Proteomes" id="UP000007639">
    <property type="component" value="Genome"/>
</dbReference>
<dbReference type="GO" id="GO:0042025">
    <property type="term" value="C:host cell nucleus"/>
    <property type="evidence" value="ECO:0007669"/>
    <property type="project" value="UniProtKB-SubCell"/>
</dbReference>
<dbReference type="InterPro" id="IPR005030">
    <property type="entry name" value="Herpes_LP"/>
</dbReference>
<dbReference type="Pfam" id="PF03363">
    <property type="entry name" value="Herpes_LP"/>
    <property type="match status" value="6"/>
</dbReference>
<feature type="chain" id="PRO_0000376061" description="Epstein-Barr nuclear antigen leader protein">
    <location>
        <begin position="1"/>
        <end position="506"/>
    </location>
</feature>
<feature type="region of interest" description="Disordered" evidence="2">
    <location>
        <begin position="1"/>
        <end position="471"/>
    </location>
</feature>
<feature type="modified residue" description="Phosphoserine; by host" evidence="1">
    <location>
        <position position="35"/>
    </location>
</feature>
<name>EBNA5_EBVA8</name>
<comment type="function">
    <text evidence="1">Plays an important role in the establishment of B-cell immortalization by acting as an EBNA2 coactivator. This transcriptional activation preferentially enhances the expression of the major viral protein LMP1. The interaction between EBNA-LP and host SP100 correlates with coactivation of EBNA2 and the relocalization of SP100 from PML nuclear bodies into nucleoplasm (By similarity).</text>
</comment>
<comment type="subunit">
    <text evidence="1">Homooligomer. Interacts with host SP100; this interaction is important for EBNA-LP coactivator activity. Interacts with host HAX1, ERR1 and HSPA2. Interacts with host PRKDC and AKAP8L; these interactions modulate the coactivator function of EBNA-LP (By similarity).</text>
</comment>
<comment type="subcellular location">
    <subcellularLocation>
        <location evidence="1">Host nucleus</location>
    </subcellularLocation>
</comment>
<comment type="PTM">
    <text evidence="1">Phosphorylated by the cellular protein kinase cdc2.</text>
</comment>
<comment type="similarity">
    <text evidence="3">Belongs to the lymphocryptovirus EBNA-LP family.</text>
</comment>
<proteinExistence type="inferred from homology"/>
<organismHost>
    <name type="scientific">Homo sapiens</name>
    <name type="common">Human</name>
    <dbReference type="NCBI Taxonomy" id="9606"/>
</organismHost>
<sequence length="506" mass="54751">MGDRSEVPGPARPGPPGIGPEGPLGQLLRRHRSPSPTRGGQEPRRVRRRVLVQQEEEVVSGSPSGPRGDRSEVPGPARPGPPGIGPEGPLGQLLRRHRSPSPTRGGQEPRRVRRRVLVQQEEEVVSGSPSGPRGDRSEVPGPARPGPPGIGPEGPLGQLLRRHRSPSPTRGGQEPRRVRRRVLVQQEEEVVSGSPSGPRGDRSEVPGPARPGPPGIGPEGPLGQLLRRHRSPSPTRGGQEPRRVRRRVLVQQEEEVVSGSPSGPRGDRSEVPGPARPGPPGIGPEGPLGQLLRRHRSPSPTRGGQEPRRVRRRVLVQQEEEVVSGSPSGPRGDRSEVPGPARPGPPGIGPEGPLGQLLRRHRSPSPTRGGQEPRRVRRRVLVQQEEEVVSGSPSGPRGDRSEVPGPARPGPPGIGPEGPLGQLLRRHRSPSPTRGGQEPRRVRRRVLVQQEEEVVSGSPSGPLRPRPQPPAQSLREWLLRISERFDPHPVATRRQSVYIEEEEDED</sequence>
<keyword id="KW-0010">Activator</keyword>
<keyword id="KW-1048">Host nucleus</keyword>
<keyword id="KW-0945">Host-virus interaction</keyword>
<keyword id="KW-0597">Phosphoprotein</keyword>
<keyword id="KW-1185">Reference proteome</keyword>
<keyword id="KW-0804">Transcription</keyword>
<keyword id="KW-0805">Transcription regulation</keyword>
<accession>Q1HVI8</accession>
<gene>
    <name type="primary">EBNA-LP</name>
    <name type="synonym">EBNA5</name>
</gene>
<protein>
    <recommendedName>
        <fullName>Epstein-Barr nuclear antigen leader protein</fullName>
        <shortName>EBNA-LP</shortName>
        <shortName>EBV nuclear antigen leader protein</shortName>
    </recommendedName>
    <alternativeName>
        <fullName>Epstein-Barr nuclear antigen 5</fullName>
        <shortName>EBNA-5</shortName>
        <shortName>EBV nuclear antigen 5</shortName>
    </alternativeName>
</protein>
<evidence type="ECO:0000250" key="1"/>
<evidence type="ECO:0000256" key="2">
    <source>
        <dbReference type="SAM" id="MobiDB-lite"/>
    </source>
</evidence>
<evidence type="ECO:0000305" key="3"/>